<name>Y2102_YERPY</name>
<protein>
    <recommendedName>
        <fullName evidence="1">UPF0229 protein YPK_2102</fullName>
    </recommendedName>
</protein>
<evidence type="ECO:0000255" key="1">
    <source>
        <dbReference type="HAMAP-Rule" id="MF_01232"/>
    </source>
</evidence>
<evidence type="ECO:0000256" key="2">
    <source>
        <dbReference type="SAM" id="MobiDB-lite"/>
    </source>
</evidence>
<proteinExistence type="inferred from homology"/>
<dbReference type="EMBL" id="CP000950">
    <property type="protein sequence ID" value="ACA68388.1"/>
    <property type="molecule type" value="Genomic_DNA"/>
</dbReference>
<dbReference type="RefSeq" id="WP_002216501.1">
    <property type="nucleotide sequence ID" value="NZ_CP009792.1"/>
</dbReference>
<dbReference type="SMR" id="B1JLG9"/>
<dbReference type="KEGG" id="ypy:YPK_2102"/>
<dbReference type="PATRIC" id="fig|502800.11.peg.2777"/>
<dbReference type="HAMAP" id="MF_01232">
    <property type="entry name" value="UPF0229"/>
    <property type="match status" value="1"/>
</dbReference>
<dbReference type="InterPro" id="IPR006698">
    <property type="entry name" value="UPF0229"/>
</dbReference>
<dbReference type="NCBIfam" id="NF003707">
    <property type="entry name" value="PRK05325.1-2"/>
    <property type="match status" value="1"/>
</dbReference>
<dbReference type="NCBIfam" id="NF003708">
    <property type="entry name" value="PRK05325.1-3"/>
    <property type="match status" value="1"/>
</dbReference>
<dbReference type="PANTHER" id="PTHR30510">
    <property type="entry name" value="UPF0229 PROTEIN YEAH"/>
    <property type="match status" value="1"/>
</dbReference>
<dbReference type="PANTHER" id="PTHR30510:SF2">
    <property type="entry name" value="UPF0229 PROTEIN YEAH"/>
    <property type="match status" value="1"/>
</dbReference>
<dbReference type="Pfam" id="PF04285">
    <property type="entry name" value="DUF444"/>
    <property type="match status" value="1"/>
</dbReference>
<organism>
    <name type="scientific">Yersinia pseudotuberculosis serotype O:3 (strain YPIII)</name>
    <dbReference type="NCBI Taxonomy" id="502800"/>
    <lineage>
        <taxon>Bacteria</taxon>
        <taxon>Pseudomonadati</taxon>
        <taxon>Pseudomonadota</taxon>
        <taxon>Gammaproteobacteria</taxon>
        <taxon>Enterobacterales</taxon>
        <taxon>Yersiniaceae</taxon>
        <taxon>Yersinia</taxon>
    </lineage>
</organism>
<gene>
    <name type="ordered locus">YPK_2102</name>
</gene>
<accession>B1JLG9</accession>
<feature type="chain" id="PRO_1000139661" description="UPF0229 protein YPK_2102">
    <location>
        <begin position="1"/>
        <end position="424"/>
    </location>
</feature>
<feature type="region of interest" description="Disordered" evidence="2">
    <location>
        <begin position="84"/>
        <end position="109"/>
    </location>
</feature>
<feature type="compositionally biased region" description="Gly residues" evidence="2">
    <location>
        <begin position="92"/>
        <end position="105"/>
    </location>
</feature>
<sequence length="424" mass="49080">MGYFIDRRLNGKNKSMVNRQRFLRRYKSQIKQSIADAINKRSVTDIESGESVSIPIDDINEPMFHQGNGGLRHRVHPGNDHFITNDRVDRPQGGGGGGSGQGNAGKDGEGEDEFVFQISKDEYLDLLFEDLALPNLKRNQYKQLAEFKTHRAGYTSNGVPANISVVRSLQNSLARRTAMTASKRRELRELEAALTVLENSEPAQLLEEERLRKAITELKQKIARVPFIDTFDLRYKNYERRPEPSSQAVMFCLMDVSGSMDQATKDMAKRFYILLYLFLSRTYKNVDVVYIRHHTQAKEVDEQEFFYSQETGGTIVSSALKLMDEVVQERYNPAQWNIYAAQASDGDNWADDSPLCHELLAKKILPVVRYYSYIEITRRAHQTLWREYEDLEEKFDNFAIQHIREPEDIYPVFRELFHKQTVDN</sequence>
<reference key="1">
    <citation type="submission" date="2008-02" db="EMBL/GenBank/DDBJ databases">
        <title>Complete sequence of Yersinia pseudotuberculosis YPIII.</title>
        <authorList>
            <consortium name="US DOE Joint Genome Institute"/>
            <person name="Copeland A."/>
            <person name="Lucas S."/>
            <person name="Lapidus A."/>
            <person name="Glavina del Rio T."/>
            <person name="Dalin E."/>
            <person name="Tice H."/>
            <person name="Bruce D."/>
            <person name="Goodwin L."/>
            <person name="Pitluck S."/>
            <person name="Munk A.C."/>
            <person name="Brettin T."/>
            <person name="Detter J.C."/>
            <person name="Han C."/>
            <person name="Tapia R."/>
            <person name="Schmutz J."/>
            <person name="Larimer F."/>
            <person name="Land M."/>
            <person name="Hauser L."/>
            <person name="Challacombe J.F."/>
            <person name="Green L."/>
            <person name="Lindler L.E."/>
            <person name="Nikolich M.P."/>
            <person name="Richardson P."/>
        </authorList>
    </citation>
    <scope>NUCLEOTIDE SEQUENCE [LARGE SCALE GENOMIC DNA]</scope>
    <source>
        <strain>YPIII</strain>
    </source>
</reference>
<comment type="similarity">
    <text evidence="1">Belongs to the UPF0229 family.</text>
</comment>